<reference key="1">
    <citation type="journal article" date="1998" name="Genome Res.">
        <title>Comparative sequence analysis of a gene-rich cluster at human chromosome 12p13 and its syntenic region in mouse chromosome 6.</title>
        <authorList>
            <person name="Ansari-Lari M.A."/>
            <person name="Oeltjen J.C."/>
            <person name="Schwartz S."/>
            <person name="Zhang Z."/>
            <person name="Muzny D.M."/>
            <person name="Lu J."/>
            <person name="Gorrell J.H."/>
            <person name="Chinault A.C."/>
            <person name="Belmont J.W."/>
            <person name="Miller W."/>
            <person name="Gibbs R.A."/>
        </authorList>
    </citation>
    <scope>NUCLEOTIDE SEQUENCE [GENOMIC DNA]</scope>
</reference>
<reference key="2">
    <citation type="journal article" date="2005" name="Science">
        <title>The transcriptional landscape of the mammalian genome.</title>
        <authorList>
            <person name="Carninci P."/>
            <person name="Kasukawa T."/>
            <person name="Katayama S."/>
            <person name="Gough J."/>
            <person name="Frith M.C."/>
            <person name="Maeda N."/>
            <person name="Oyama R."/>
            <person name="Ravasi T."/>
            <person name="Lenhard B."/>
            <person name="Wells C."/>
            <person name="Kodzius R."/>
            <person name="Shimokawa K."/>
            <person name="Bajic V.B."/>
            <person name="Brenner S.E."/>
            <person name="Batalov S."/>
            <person name="Forrest A.R."/>
            <person name="Zavolan M."/>
            <person name="Davis M.J."/>
            <person name="Wilming L.G."/>
            <person name="Aidinis V."/>
            <person name="Allen J.E."/>
            <person name="Ambesi-Impiombato A."/>
            <person name="Apweiler R."/>
            <person name="Aturaliya R.N."/>
            <person name="Bailey T.L."/>
            <person name="Bansal M."/>
            <person name="Baxter L."/>
            <person name="Beisel K.W."/>
            <person name="Bersano T."/>
            <person name="Bono H."/>
            <person name="Chalk A.M."/>
            <person name="Chiu K.P."/>
            <person name="Choudhary V."/>
            <person name="Christoffels A."/>
            <person name="Clutterbuck D.R."/>
            <person name="Crowe M.L."/>
            <person name="Dalla E."/>
            <person name="Dalrymple B.P."/>
            <person name="de Bono B."/>
            <person name="Della Gatta G."/>
            <person name="di Bernardo D."/>
            <person name="Down T."/>
            <person name="Engstrom P."/>
            <person name="Fagiolini M."/>
            <person name="Faulkner G."/>
            <person name="Fletcher C.F."/>
            <person name="Fukushima T."/>
            <person name="Furuno M."/>
            <person name="Futaki S."/>
            <person name="Gariboldi M."/>
            <person name="Georgii-Hemming P."/>
            <person name="Gingeras T.R."/>
            <person name="Gojobori T."/>
            <person name="Green R.E."/>
            <person name="Gustincich S."/>
            <person name="Harbers M."/>
            <person name="Hayashi Y."/>
            <person name="Hensch T.K."/>
            <person name="Hirokawa N."/>
            <person name="Hill D."/>
            <person name="Huminiecki L."/>
            <person name="Iacono M."/>
            <person name="Ikeo K."/>
            <person name="Iwama A."/>
            <person name="Ishikawa T."/>
            <person name="Jakt M."/>
            <person name="Kanapin A."/>
            <person name="Katoh M."/>
            <person name="Kawasawa Y."/>
            <person name="Kelso J."/>
            <person name="Kitamura H."/>
            <person name="Kitano H."/>
            <person name="Kollias G."/>
            <person name="Krishnan S.P."/>
            <person name="Kruger A."/>
            <person name="Kummerfeld S.K."/>
            <person name="Kurochkin I.V."/>
            <person name="Lareau L.F."/>
            <person name="Lazarevic D."/>
            <person name="Lipovich L."/>
            <person name="Liu J."/>
            <person name="Liuni S."/>
            <person name="McWilliam S."/>
            <person name="Madan Babu M."/>
            <person name="Madera M."/>
            <person name="Marchionni L."/>
            <person name="Matsuda H."/>
            <person name="Matsuzawa S."/>
            <person name="Miki H."/>
            <person name="Mignone F."/>
            <person name="Miyake S."/>
            <person name="Morris K."/>
            <person name="Mottagui-Tabar S."/>
            <person name="Mulder N."/>
            <person name="Nakano N."/>
            <person name="Nakauchi H."/>
            <person name="Ng P."/>
            <person name="Nilsson R."/>
            <person name="Nishiguchi S."/>
            <person name="Nishikawa S."/>
            <person name="Nori F."/>
            <person name="Ohara O."/>
            <person name="Okazaki Y."/>
            <person name="Orlando V."/>
            <person name="Pang K.C."/>
            <person name="Pavan W.J."/>
            <person name="Pavesi G."/>
            <person name="Pesole G."/>
            <person name="Petrovsky N."/>
            <person name="Piazza S."/>
            <person name="Reed J."/>
            <person name="Reid J.F."/>
            <person name="Ring B.Z."/>
            <person name="Ringwald M."/>
            <person name="Rost B."/>
            <person name="Ruan Y."/>
            <person name="Salzberg S.L."/>
            <person name="Sandelin A."/>
            <person name="Schneider C."/>
            <person name="Schoenbach C."/>
            <person name="Sekiguchi K."/>
            <person name="Semple C.A."/>
            <person name="Seno S."/>
            <person name="Sessa L."/>
            <person name="Sheng Y."/>
            <person name="Shibata Y."/>
            <person name="Shimada H."/>
            <person name="Shimada K."/>
            <person name="Silva D."/>
            <person name="Sinclair B."/>
            <person name="Sperling S."/>
            <person name="Stupka E."/>
            <person name="Sugiura K."/>
            <person name="Sultana R."/>
            <person name="Takenaka Y."/>
            <person name="Taki K."/>
            <person name="Tammoja K."/>
            <person name="Tan S.L."/>
            <person name="Tang S."/>
            <person name="Taylor M.S."/>
            <person name="Tegner J."/>
            <person name="Teichmann S.A."/>
            <person name="Ueda H.R."/>
            <person name="van Nimwegen E."/>
            <person name="Verardo R."/>
            <person name="Wei C.L."/>
            <person name="Yagi K."/>
            <person name="Yamanishi H."/>
            <person name="Zabarovsky E."/>
            <person name="Zhu S."/>
            <person name="Zimmer A."/>
            <person name="Hide W."/>
            <person name="Bult C."/>
            <person name="Grimmond S.M."/>
            <person name="Teasdale R.D."/>
            <person name="Liu E.T."/>
            <person name="Brusic V."/>
            <person name="Quackenbush J."/>
            <person name="Wahlestedt C."/>
            <person name="Mattick J.S."/>
            <person name="Hume D.A."/>
            <person name="Kai C."/>
            <person name="Sasaki D."/>
            <person name="Tomaru Y."/>
            <person name="Fukuda S."/>
            <person name="Kanamori-Katayama M."/>
            <person name="Suzuki M."/>
            <person name="Aoki J."/>
            <person name="Arakawa T."/>
            <person name="Iida J."/>
            <person name="Imamura K."/>
            <person name="Itoh M."/>
            <person name="Kato T."/>
            <person name="Kawaji H."/>
            <person name="Kawagashira N."/>
            <person name="Kawashima T."/>
            <person name="Kojima M."/>
            <person name="Kondo S."/>
            <person name="Konno H."/>
            <person name="Nakano K."/>
            <person name="Ninomiya N."/>
            <person name="Nishio T."/>
            <person name="Okada M."/>
            <person name="Plessy C."/>
            <person name="Shibata K."/>
            <person name="Shiraki T."/>
            <person name="Suzuki S."/>
            <person name="Tagami M."/>
            <person name="Waki K."/>
            <person name="Watahiki A."/>
            <person name="Okamura-Oho Y."/>
            <person name="Suzuki H."/>
            <person name="Kawai J."/>
            <person name="Hayashizaki Y."/>
        </authorList>
    </citation>
    <scope>NUCLEOTIDE SEQUENCE [LARGE SCALE MRNA]</scope>
    <source>
        <strain>C57BL/6J</strain>
        <tissue>Cerebellum</tissue>
        <tissue>Olfactory bulb</tissue>
    </source>
</reference>
<reference key="3">
    <citation type="journal article" date="2004" name="Genome Res.">
        <title>The status, quality, and expansion of the NIH full-length cDNA project: the Mammalian Gene Collection (MGC).</title>
        <authorList>
            <consortium name="The MGC Project Team"/>
        </authorList>
    </citation>
    <scope>NUCLEOTIDE SEQUENCE [LARGE SCALE MRNA]</scope>
    <source>
        <tissue>Eye</tissue>
    </source>
</reference>
<reference key="4">
    <citation type="journal article" date="2010" name="Cell">
        <title>A tissue-specific atlas of mouse protein phosphorylation and expression.</title>
        <authorList>
            <person name="Huttlin E.L."/>
            <person name="Jedrychowski M.P."/>
            <person name="Elias J.E."/>
            <person name="Goswami T."/>
            <person name="Rad R."/>
            <person name="Beausoleil S.A."/>
            <person name="Villen J."/>
            <person name="Haas W."/>
            <person name="Sowa M.E."/>
            <person name="Gygi S.P."/>
        </authorList>
    </citation>
    <scope>PHOSPHORYLATION [LARGE SCALE ANALYSIS] AT SER-413 AND SER-435</scope>
    <scope>IDENTIFICATION BY MASS SPECTROMETRY [LARGE SCALE ANALYSIS]</scope>
    <source>
        <tissue>Brain</tissue>
    </source>
</reference>
<accession>Q3UN16</accession>
<accession>O88835</accession>
<comment type="function">
    <text>Orphan receptor.</text>
</comment>
<comment type="subcellular location">
    <subcellularLocation>
        <location evidence="1">Cell membrane</location>
        <topology evidence="1">Multi-pass membrane protein</topology>
    </subcellularLocation>
</comment>
<comment type="similarity">
    <text evidence="3">Belongs to the G-protein coupled receptor 1 family.</text>
</comment>
<feature type="chain" id="PRO_0000069648" description="Probable G-protein coupled receptor 162">
    <location>
        <begin position="1"/>
        <end position="588"/>
    </location>
</feature>
<feature type="topological domain" description="Extracellular" evidence="2">
    <location>
        <begin position="1"/>
        <end position="17"/>
    </location>
</feature>
<feature type="transmembrane region" description="Helical; Name=1" evidence="2">
    <location>
        <begin position="18"/>
        <end position="38"/>
    </location>
</feature>
<feature type="topological domain" description="Cytoplasmic" evidence="2">
    <location>
        <begin position="39"/>
        <end position="49"/>
    </location>
</feature>
<feature type="transmembrane region" description="Helical; Name=2" evidence="2">
    <location>
        <begin position="50"/>
        <end position="70"/>
    </location>
</feature>
<feature type="topological domain" description="Extracellular" evidence="2">
    <location>
        <begin position="71"/>
        <end position="91"/>
    </location>
</feature>
<feature type="transmembrane region" description="Helical; Name=3" evidence="2">
    <location>
        <begin position="92"/>
        <end position="112"/>
    </location>
</feature>
<feature type="topological domain" description="Cytoplasmic" evidence="2">
    <location>
        <begin position="113"/>
        <end position="133"/>
    </location>
</feature>
<feature type="transmembrane region" description="Helical; Name=4" evidence="2">
    <location>
        <begin position="134"/>
        <end position="154"/>
    </location>
</feature>
<feature type="topological domain" description="Extracellular" evidence="2">
    <location>
        <begin position="155"/>
        <end position="174"/>
    </location>
</feature>
<feature type="transmembrane region" description="Helical; Name=5" evidence="2">
    <location>
        <begin position="175"/>
        <end position="195"/>
    </location>
</feature>
<feature type="topological domain" description="Cytoplasmic" evidence="2">
    <location>
        <begin position="196"/>
        <end position="275"/>
    </location>
</feature>
<feature type="transmembrane region" description="Helical; Name=6" evidence="2">
    <location>
        <begin position="276"/>
        <end position="296"/>
    </location>
</feature>
<feature type="topological domain" description="Extracellular" evidence="2">
    <location>
        <begin position="297"/>
        <end position="303"/>
    </location>
</feature>
<feature type="transmembrane region" description="Helical; Name=7" evidence="2">
    <location>
        <begin position="304"/>
        <end position="324"/>
    </location>
</feature>
<feature type="topological domain" description="Cytoplasmic" evidence="2">
    <location>
        <begin position="325"/>
        <end position="588"/>
    </location>
</feature>
<feature type="region of interest" description="Disordered" evidence="4">
    <location>
        <begin position="511"/>
        <end position="545"/>
    </location>
</feature>
<feature type="region of interest" description="Disordered" evidence="4">
    <location>
        <begin position="561"/>
        <end position="588"/>
    </location>
</feature>
<feature type="compositionally biased region" description="Pro residues" evidence="4">
    <location>
        <begin position="514"/>
        <end position="525"/>
    </location>
</feature>
<feature type="compositionally biased region" description="Low complexity" evidence="4">
    <location>
        <begin position="530"/>
        <end position="540"/>
    </location>
</feature>
<feature type="modified residue" description="Phosphoserine" evidence="6">
    <location>
        <position position="413"/>
    </location>
</feature>
<feature type="modified residue" description="Phosphoserine" evidence="6">
    <location>
        <position position="435"/>
    </location>
</feature>
<feature type="glycosylation site" description="N-linked (GlcNAc...) asparagine" evidence="2">
    <location>
        <position position="86"/>
    </location>
</feature>
<feature type="sequence conflict" description="In Ref. 2; BAE25932." evidence="5" ref="2">
    <original>S</original>
    <variation>Y</variation>
    <location>
        <position position="346"/>
    </location>
</feature>
<dbReference type="EMBL" id="AC002397">
    <property type="protein sequence ID" value="AAC36011.1"/>
    <property type="molecule type" value="Genomic_DNA"/>
</dbReference>
<dbReference type="EMBL" id="AK134941">
    <property type="protein sequence ID" value="BAE22348.1"/>
    <property type="molecule type" value="mRNA"/>
</dbReference>
<dbReference type="EMBL" id="AK144354">
    <property type="protein sequence ID" value="BAE25846.1"/>
    <property type="molecule type" value="mRNA"/>
</dbReference>
<dbReference type="EMBL" id="AK144543">
    <property type="protein sequence ID" value="BAE25932.1"/>
    <property type="molecule type" value="mRNA"/>
</dbReference>
<dbReference type="EMBL" id="BC031437">
    <property type="protein sequence ID" value="AAH31437.1"/>
    <property type="molecule type" value="mRNA"/>
</dbReference>
<dbReference type="CCDS" id="CCDS20534.1"/>
<dbReference type="RefSeq" id="NP_001342186.1">
    <property type="nucleotide sequence ID" value="NM_001355257.2"/>
</dbReference>
<dbReference type="RefSeq" id="NP_001396767.1">
    <property type="nucleotide sequence ID" value="NM_001409838.1"/>
</dbReference>
<dbReference type="RefSeq" id="NP_001396768.1">
    <property type="nucleotide sequence ID" value="NM_001409839.1"/>
</dbReference>
<dbReference type="RefSeq" id="NP_001396769.1">
    <property type="nucleotide sequence ID" value="NM_001409840.1"/>
</dbReference>
<dbReference type="RefSeq" id="NP_038561.1">
    <property type="nucleotide sequence ID" value="NM_013533.5"/>
</dbReference>
<dbReference type="RefSeq" id="XP_006505618.1">
    <property type="nucleotide sequence ID" value="XM_006505555.3"/>
</dbReference>
<dbReference type="RefSeq" id="XP_006505619.1">
    <property type="nucleotide sequence ID" value="XM_006505556.3"/>
</dbReference>
<dbReference type="RefSeq" id="XP_006505620.1">
    <property type="nucleotide sequence ID" value="XM_006505557.3"/>
</dbReference>
<dbReference type="RefSeq" id="XP_011239517.1">
    <property type="nucleotide sequence ID" value="XM_011241215.2"/>
</dbReference>
<dbReference type="SMR" id="Q3UN16"/>
<dbReference type="BioGRID" id="200049">
    <property type="interactions" value="3"/>
</dbReference>
<dbReference type="FunCoup" id="Q3UN16">
    <property type="interactions" value="61"/>
</dbReference>
<dbReference type="STRING" id="10090.ENSMUSP00000145267"/>
<dbReference type="GlyCosmos" id="Q3UN16">
    <property type="glycosylation" value="1 site, No reported glycans"/>
</dbReference>
<dbReference type="GlyGen" id="Q3UN16">
    <property type="glycosylation" value="2 sites, 1 N-linked glycan (1 site)"/>
</dbReference>
<dbReference type="iPTMnet" id="Q3UN16"/>
<dbReference type="PhosphoSitePlus" id="Q3UN16"/>
<dbReference type="SwissPalm" id="Q3UN16"/>
<dbReference type="jPOST" id="Q3UN16"/>
<dbReference type="PaxDb" id="10090-ENSMUSP00000038536"/>
<dbReference type="ProteomicsDB" id="271424"/>
<dbReference type="Antibodypedia" id="41966">
    <property type="antibodies" value="112 antibodies from 25 providers"/>
</dbReference>
<dbReference type="DNASU" id="14788"/>
<dbReference type="Ensembl" id="ENSMUST00000046893.10">
    <property type="protein sequence ID" value="ENSMUSP00000038536.8"/>
    <property type="gene ID" value="ENSMUSG00000038390.12"/>
</dbReference>
<dbReference type="Ensembl" id="ENSMUST00000204667.2">
    <property type="protein sequence ID" value="ENSMUSP00000145267.2"/>
    <property type="gene ID" value="ENSMUSG00000038390.12"/>
</dbReference>
<dbReference type="GeneID" id="14788"/>
<dbReference type="KEGG" id="mmu:14788"/>
<dbReference type="UCSC" id="uc009dsg.1">
    <property type="organism name" value="mouse"/>
</dbReference>
<dbReference type="AGR" id="MGI:1315214"/>
<dbReference type="CTD" id="27239"/>
<dbReference type="MGI" id="MGI:1315214">
    <property type="gene designation" value="Gpr162"/>
</dbReference>
<dbReference type="VEuPathDB" id="HostDB:ENSMUSG00000038390"/>
<dbReference type="eggNOG" id="ENOG502QVAA">
    <property type="taxonomic scope" value="Eukaryota"/>
</dbReference>
<dbReference type="GeneTree" id="ENSGT00390000017213"/>
<dbReference type="HOGENOM" id="CLU_031636_2_0_1"/>
<dbReference type="InParanoid" id="Q3UN16"/>
<dbReference type="OMA" id="PQLHDYQ"/>
<dbReference type="OrthoDB" id="9887972at2759"/>
<dbReference type="PhylomeDB" id="Q3UN16"/>
<dbReference type="TreeFam" id="TF330832"/>
<dbReference type="BioGRID-ORCS" id="14788">
    <property type="hits" value="2 hits in 76 CRISPR screens"/>
</dbReference>
<dbReference type="PRO" id="PR:Q3UN16"/>
<dbReference type="Proteomes" id="UP000000589">
    <property type="component" value="Chromosome 6"/>
</dbReference>
<dbReference type="RNAct" id="Q3UN16">
    <property type="molecule type" value="protein"/>
</dbReference>
<dbReference type="Bgee" id="ENSMUSG00000038390">
    <property type="expression patterns" value="Expressed in perirhinal cortex and 130 other cell types or tissues"/>
</dbReference>
<dbReference type="GO" id="GO:0005886">
    <property type="term" value="C:plasma membrane"/>
    <property type="evidence" value="ECO:0007669"/>
    <property type="project" value="UniProtKB-SubCell"/>
</dbReference>
<dbReference type="GO" id="GO:0004930">
    <property type="term" value="F:G protein-coupled receptor activity"/>
    <property type="evidence" value="ECO:0007669"/>
    <property type="project" value="UniProtKB-KW"/>
</dbReference>
<dbReference type="CDD" id="cd15906">
    <property type="entry name" value="7tmA_GPR162"/>
    <property type="match status" value="1"/>
</dbReference>
<dbReference type="Gene3D" id="1.20.1070.10">
    <property type="entry name" value="Rhodopsin 7-helix transmembrane proteins"/>
    <property type="match status" value="1"/>
</dbReference>
<dbReference type="InterPro" id="IPR022347">
    <property type="entry name" value="GCR_153/162"/>
</dbReference>
<dbReference type="InterPro" id="IPR000276">
    <property type="entry name" value="GPCR_Rhodpsn"/>
</dbReference>
<dbReference type="InterPro" id="IPR017452">
    <property type="entry name" value="GPCR_Rhodpsn_7TM"/>
</dbReference>
<dbReference type="InterPro" id="IPR022348">
    <property type="entry name" value="GPR162"/>
</dbReference>
<dbReference type="PANTHER" id="PTHR16518">
    <property type="entry name" value="G-PROTEIN COUPLED RECEPTOR 153, 162"/>
    <property type="match status" value="1"/>
</dbReference>
<dbReference type="PANTHER" id="PTHR16518:SF6">
    <property type="entry name" value="G-PROTEIN COUPLED RECEPTOR 162-RELATED"/>
    <property type="match status" value="1"/>
</dbReference>
<dbReference type="Pfam" id="PF00001">
    <property type="entry name" value="7tm_1"/>
    <property type="match status" value="1"/>
</dbReference>
<dbReference type="PRINTS" id="PR01991">
    <property type="entry name" value="GPR153GPR162"/>
</dbReference>
<dbReference type="PRINTS" id="PR01993">
    <property type="entry name" value="GPR162"/>
</dbReference>
<dbReference type="SUPFAM" id="SSF81321">
    <property type="entry name" value="Family A G protein-coupled receptor-like"/>
    <property type="match status" value="1"/>
</dbReference>
<dbReference type="PROSITE" id="PS50262">
    <property type="entry name" value="G_PROTEIN_RECEP_F1_2"/>
    <property type="match status" value="1"/>
</dbReference>
<protein>
    <recommendedName>
        <fullName>Probable G-protein coupled receptor 162</fullName>
    </recommendedName>
</protein>
<gene>
    <name type="primary">Gpr162</name>
</gene>
<sequence>MARGGLGAEEASLRSNALSWLACGLLALLANAWIILSISAKQQKHKPLELLLCFLAGTHILMAAVPLTTFAVVQLRRQASSDYDWNESICKVFVSTYYTLALATCFTVASLSYHRMWMVRWPVNYRLSNAKKQALHAVMGIWMVSFILSTLPSIGWHNNGERYYARGCQFIVSKIGLGFGVCFSLLLLGGIVMGLVCVAITFYQTLWARPRRARQARRAGGSVGTKAGGLGGLGTRPAFEVPAIVVEDTRGKRRSSLDGSESAKTSLQVTNLVSAIVFLYDSLTGVPILVVSFFSLKSDSAPPWMVLAVLWCSMAQTLLLPSFIWSCERYRADVRTVWEQCVAIMSEDDGDDDGTCDDYTDGRVCKIRFDANGATGSGSRDPTQVKLLPGRHMLFPPLERVHYLQVPLSRRLSHDETNIFSTPRAPGSFLHKWSSSDDIRILPAQSRALGGPPEYLGQRHRLEDEEDEEEAEGGGLASLRQFLESGVLGSGGGPPRGPGFFREEITTFIDETPLPSPTASPGPSPRRPRPLGFSPRRLSLGSPDSRAVGLPLGLSAGRRCSLTGSEGSSRAWGRPWGPGNPIFPQLTL</sequence>
<proteinExistence type="evidence at protein level"/>
<organism>
    <name type="scientific">Mus musculus</name>
    <name type="common">Mouse</name>
    <dbReference type="NCBI Taxonomy" id="10090"/>
    <lineage>
        <taxon>Eukaryota</taxon>
        <taxon>Metazoa</taxon>
        <taxon>Chordata</taxon>
        <taxon>Craniata</taxon>
        <taxon>Vertebrata</taxon>
        <taxon>Euteleostomi</taxon>
        <taxon>Mammalia</taxon>
        <taxon>Eutheria</taxon>
        <taxon>Euarchontoglires</taxon>
        <taxon>Glires</taxon>
        <taxon>Rodentia</taxon>
        <taxon>Myomorpha</taxon>
        <taxon>Muroidea</taxon>
        <taxon>Muridae</taxon>
        <taxon>Murinae</taxon>
        <taxon>Mus</taxon>
        <taxon>Mus</taxon>
    </lineage>
</organism>
<evidence type="ECO:0000250" key="1"/>
<evidence type="ECO:0000255" key="2"/>
<evidence type="ECO:0000255" key="3">
    <source>
        <dbReference type="PROSITE-ProRule" id="PRU00521"/>
    </source>
</evidence>
<evidence type="ECO:0000256" key="4">
    <source>
        <dbReference type="SAM" id="MobiDB-lite"/>
    </source>
</evidence>
<evidence type="ECO:0000305" key="5"/>
<evidence type="ECO:0007744" key="6">
    <source>
    </source>
</evidence>
<name>GP162_MOUSE</name>
<keyword id="KW-1003">Cell membrane</keyword>
<keyword id="KW-0297">G-protein coupled receptor</keyword>
<keyword id="KW-0325">Glycoprotein</keyword>
<keyword id="KW-0472">Membrane</keyword>
<keyword id="KW-0597">Phosphoprotein</keyword>
<keyword id="KW-0675">Receptor</keyword>
<keyword id="KW-1185">Reference proteome</keyword>
<keyword id="KW-0807">Transducer</keyword>
<keyword id="KW-0812">Transmembrane</keyword>
<keyword id="KW-1133">Transmembrane helix</keyword>